<gene>
    <name evidence="2" type="primary">SIRT4</name>
</gene>
<comment type="function">
    <text evidence="2">Acts as a NAD-dependent protein lipoamidase, biotinylase, deacetylase and ADP-ribosyl transferase. Catalyzes more efficiently removal of lipoyl- and biotinyl- than acetyl-lysine modifications. Inhibits the pyruvate dehydrogenase complex (PDH) activity via the enzymatic hydrolysis of the lipoamide cofactor from the E2 component, DLAT, in a phosphorylation-independent manner. Catalyzes the transfer of ADP-ribosyl groups onto target proteins, including mitochondrial GLUD1, inhibiting GLUD1 enzyme activity. Acts as a negative regulator of mitochondrial glutamine metabolism by mediating mono ADP-ribosylation of GLUD1: expressed in response to DNA damage and negatively regulates anaplerosis by inhibiting GLUD1, leading to block metabolism of glutamine into tricarboxylic acid cycle and promoting cell cycle arrest. In response to mTORC1 signal, SIRT4 expression is repressed, promoting anaplerosis and cell proliferation. Acts as a tumor suppressor. Also acts as a NAD-dependent protein deacetylase: mediates deacetylation of 'Lys-471' of MLYCD, inhibiting its activity, thereby acting as a regulator of lipid homeostasis. Does not seem to deacetylate PC. Controls fatty acid oxidation by inhibiting PPARA transcriptional activation. Impairs SIRT1-PPARA interaction probably through the regulation of NAD(+) levels. Down-regulates insulin secretion (By similarity).</text>
</comment>
<comment type="catalytic activity">
    <reaction evidence="2">
        <text>N(6)-[(R)-lipoyl]-L-lysyl-[protein] + NAD(+) + H2O = 2''-O-lipoyl-ADP-D-ribose + nicotinamide + L-lysyl-[protein]</text>
        <dbReference type="Rhea" id="RHEA:63640"/>
        <dbReference type="Rhea" id="RHEA-COMP:9752"/>
        <dbReference type="Rhea" id="RHEA-COMP:10474"/>
        <dbReference type="ChEBI" id="CHEBI:15377"/>
        <dbReference type="ChEBI" id="CHEBI:17154"/>
        <dbReference type="ChEBI" id="CHEBI:29969"/>
        <dbReference type="ChEBI" id="CHEBI:57540"/>
        <dbReference type="ChEBI" id="CHEBI:83099"/>
        <dbReference type="ChEBI" id="CHEBI:189572"/>
    </reaction>
    <physiologicalReaction direction="left-to-right" evidence="2">
        <dbReference type="Rhea" id="RHEA:63641"/>
    </physiologicalReaction>
</comment>
<comment type="catalytic activity">
    <reaction evidence="2">
        <text>N(6)-biotinyl-L-lysyl-[protein] + NAD(+) + H2O = 2''-O-biotinyl-ADP-D-ribose + nicotinamide + L-lysyl-[protein]</text>
        <dbReference type="Rhea" id="RHEA:70479"/>
        <dbReference type="Rhea" id="RHEA-COMP:9752"/>
        <dbReference type="Rhea" id="RHEA-COMP:10505"/>
        <dbReference type="ChEBI" id="CHEBI:15377"/>
        <dbReference type="ChEBI" id="CHEBI:17154"/>
        <dbReference type="ChEBI" id="CHEBI:29969"/>
        <dbReference type="ChEBI" id="CHEBI:57540"/>
        <dbReference type="ChEBI" id="CHEBI:83144"/>
        <dbReference type="ChEBI" id="CHEBI:189573"/>
    </reaction>
    <physiologicalReaction direction="left-to-right" evidence="2">
        <dbReference type="Rhea" id="RHEA:70480"/>
    </physiologicalReaction>
</comment>
<comment type="catalytic activity">
    <reaction evidence="2">
        <text>N(6)-acetyl-L-lysyl-[protein] + NAD(+) + H2O = 2''-O-acetyl-ADP-D-ribose + nicotinamide + L-lysyl-[protein]</text>
        <dbReference type="Rhea" id="RHEA:43636"/>
        <dbReference type="Rhea" id="RHEA-COMP:9752"/>
        <dbReference type="Rhea" id="RHEA-COMP:10731"/>
        <dbReference type="ChEBI" id="CHEBI:15377"/>
        <dbReference type="ChEBI" id="CHEBI:17154"/>
        <dbReference type="ChEBI" id="CHEBI:29969"/>
        <dbReference type="ChEBI" id="CHEBI:57540"/>
        <dbReference type="ChEBI" id="CHEBI:61930"/>
        <dbReference type="ChEBI" id="CHEBI:83767"/>
        <dbReference type="EC" id="2.3.1.286"/>
    </reaction>
    <physiologicalReaction direction="left-to-right" evidence="2">
        <dbReference type="Rhea" id="RHEA:43637"/>
    </physiologicalReaction>
</comment>
<comment type="catalytic activity">
    <reaction evidence="2">
        <text>L-cysteinyl-[protein] + NAD(+) = S-(ADP-D-ribosyl)-L-cysteinyl-[protein] + nicotinamide + H(+)</text>
        <dbReference type="Rhea" id="RHEA:56612"/>
        <dbReference type="Rhea" id="RHEA-COMP:10131"/>
        <dbReference type="Rhea" id="RHEA-COMP:14624"/>
        <dbReference type="ChEBI" id="CHEBI:15378"/>
        <dbReference type="ChEBI" id="CHEBI:17154"/>
        <dbReference type="ChEBI" id="CHEBI:29950"/>
        <dbReference type="ChEBI" id="CHEBI:57540"/>
        <dbReference type="ChEBI" id="CHEBI:140607"/>
    </reaction>
</comment>
<comment type="cofactor">
    <cofactor evidence="2">
        <name>Zn(2+)</name>
        <dbReference type="ChEBI" id="CHEBI:29105"/>
    </cofactor>
    <text evidence="2">Binds 1 zinc ion per subunit.</text>
</comment>
<comment type="subunit">
    <text evidence="1 2">Interacts with GLUD1, IDE and SLC25A5. Interacts with DLAT and PDHX (By similarity). Interacts with MCCC1 (via the biotin carboxylation domain) (By similarity). Interacts with PCCA and PC (By similarity).</text>
</comment>
<comment type="subcellular location">
    <subcellularLocation>
        <location evidence="2">Mitochondrion matrix</location>
    </subcellularLocation>
</comment>
<comment type="miscellaneous">
    <text evidence="2">According to some authors, ADP-ribosyltransferase activity of sirtuins may be an inefficient side reaction of the deacetylase activity and may not be physiologically relevant.</text>
</comment>
<comment type="similarity">
    <text evidence="2">Belongs to the sirtuin family. Class II subfamily.</text>
</comment>
<accession>Q1JQC6</accession>
<evidence type="ECO:0000250" key="1">
    <source>
        <dbReference type="UniProtKB" id="Q9Y6E7"/>
    </source>
</evidence>
<evidence type="ECO:0000255" key="2">
    <source>
        <dbReference type="HAMAP-Rule" id="MF_03161"/>
    </source>
</evidence>
<evidence type="ECO:0000255" key="3">
    <source>
        <dbReference type="PROSITE-ProRule" id="PRU00236"/>
    </source>
</evidence>
<feature type="transit peptide" description="Mitochondrion" evidence="2">
    <location>
        <begin position="1"/>
        <end position="29"/>
    </location>
</feature>
<feature type="chain" id="PRO_0000260458" description="NAD-dependent protein lipoamidase sirtuin-4, mitochondrial">
    <location>
        <begin position="30"/>
        <end position="315"/>
    </location>
</feature>
<feature type="domain" description="Deacetylase sirtuin-type" evidence="3">
    <location>
        <begin position="38"/>
        <end position="315"/>
    </location>
</feature>
<feature type="active site" description="Proton acceptor" evidence="3">
    <location>
        <position position="162"/>
    </location>
</feature>
<feature type="binding site" evidence="2">
    <location>
        <begin position="63"/>
        <end position="83"/>
    </location>
    <ligand>
        <name>NAD(+)</name>
        <dbReference type="ChEBI" id="CHEBI:57540"/>
    </ligand>
</feature>
<feature type="binding site" evidence="2">
    <location>
        <begin position="144"/>
        <end position="147"/>
    </location>
    <ligand>
        <name>NAD(+)</name>
        <dbReference type="ChEBI" id="CHEBI:57540"/>
    </ligand>
</feature>
<feature type="binding site" evidence="2">
    <location>
        <position position="170"/>
    </location>
    <ligand>
        <name>Zn(2+)</name>
        <dbReference type="ChEBI" id="CHEBI:29105"/>
    </ligand>
</feature>
<feature type="binding site" evidence="2">
    <location>
        <position position="173"/>
    </location>
    <ligand>
        <name>Zn(2+)</name>
        <dbReference type="ChEBI" id="CHEBI:29105"/>
    </ligand>
</feature>
<feature type="binding site" evidence="2">
    <location>
        <position position="221"/>
    </location>
    <ligand>
        <name>Zn(2+)</name>
        <dbReference type="ChEBI" id="CHEBI:29105"/>
    </ligand>
</feature>
<feature type="binding site" evidence="2">
    <location>
        <position position="224"/>
    </location>
    <ligand>
        <name>Zn(2+)</name>
        <dbReference type="ChEBI" id="CHEBI:29105"/>
    </ligand>
</feature>
<feature type="binding site" evidence="2">
    <location>
        <begin position="261"/>
        <end position="263"/>
    </location>
    <ligand>
        <name>NAD(+)</name>
        <dbReference type="ChEBI" id="CHEBI:57540"/>
    </ligand>
</feature>
<feature type="binding site" evidence="2">
    <location>
        <begin position="287"/>
        <end position="289"/>
    </location>
    <ligand>
        <name>NAD(+)</name>
        <dbReference type="ChEBI" id="CHEBI:57540"/>
    </ligand>
</feature>
<feature type="binding site" evidence="2">
    <location>
        <position position="305"/>
    </location>
    <ligand>
        <name>NAD(+)</name>
        <dbReference type="ChEBI" id="CHEBI:57540"/>
    </ligand>
</feature>
<organism>
    <name type="scientific">Bos taurus</name>
    <name type="common">Bovine</name>
    <dbReference type="NCBI Taxonomy" id="9913"/>
    <lineage>
        <taxon>Eukaryota</taxon>
        <taxon>Metazoa</taxon>
        <taxon>Chordata</taxon>
        <taxon>Craniata</taxon>
        <taxon>Vertebrata</taxon>
        <taxon>Euteleostomi</taxon>
        <taxon>Mammalia</taxon>
        <taxon>Eutheria</taxon>
        <taxon>Laurasiatheria</taxon>
        <taxon>Artiodactyla</taxon>
        <taxon>Ruminantia</taxon>
        <taxon>Pecora</taxon>
        <taxon>Bovidae</taxon>
        <taxon>Bovinae</taxon>
        <taxon>Bos</taxon>
    </lineage>
</organism>
<name>SIR4_BOVIN</name>
<proteinExistence type="evidence at transcript level"/>
<protein>
    <recommendedName>
        <fullName evidence="2">NAD-dependent protein lipoamidase sirtuin-4, mitochondrial</fullName>
        <ecNumber evidence="2">2.3.1.-</ecNumber>
    </recommendedName>
    <alternativeName>
        <fullName evidence="2">NAD-dependent ADP-ribosyltransferase sirtuin-4</fullName>
        <ecNumber evidence="2">2.4.2.-</ecNumber>
    </alternativeName>
    <alternativeName>
        <fullName evidence="2">NAD-dependent protein biotinylase sirtuin-4</fullName>
        <ecNumber evidence="2">2.3.1.-</ecNumber>
    </alternativeName>
    <alternativeName>
        <fullName evidence="2">NAD-dependent protein deacetylase sirtuin-4</fullName>
        <ecNumber evidence="2 3">2.3.1.286</ecNumber>
    </alternativeName>
    <alternativeName>
        <fullName evidence="2">Regulatory protein SIR2 homolog 4</fullName>
    </alternativeName>
    <alternativeName>
        <fullName evidence="2">SIR2-like protein 4</fullName>
    </alternativeName>
</protein>
<sequence length="315" mass="35588">MRMSFGLTFKRTAKVHWRANFSQQCSLRSTGLFVPPSPPLDPEKVKELQRFITLSKRLLVMTGAGISTESGIPDYRSEKVGLYARTDRRPIQHGDFVRSAPVRQRYWARNFVGWPQFSSRQPNPAHWALSNWERLGKLHWLVTQNVDALHTKAGSQRLTELHGCMHRVLCLDCGEQTPRGVLQERFQVLNPTWSAEAHGLAPDGDVFLTEEEVQSFQVPSCSRCGGPLKPDVVFFGDTVKPDKVDFVHKRVKEADSLLVVGSSLQVYSGYRFILTAREKKLPIVILNIGPTRSDDLASLKLDSRCGELLPLIDPR</sequence>
<keyword id="KW-0227">DNA damage</keyword>
<keyword id="KW-0328">Glycosyltransferase</keyword>
<keyword id="KW-0479">Metal-binding</keyword>
<keyword id="KW-0496">Mitochondrion</keyword>
<keyword id="KW-0520">NAD</keyword>
<keyword id="KW-0548">Nucleotidyltransferase</keyword>
<keyword id="KW-1185">Reference proteome</keyword>
<keyword id="KW-0808">Transferase</keyword>
<keyword id="KW-0809">Transit peptide</keyword>
<keyword id="KW-0043">Tumor suppressor</keyword>
<keyword id="KW-0862">Zinc</keyword>
<dbReference type="EC" id="2.3.1.-" evidence="2"/>
<dbReference type="EC" id="2.4.2.-" evidence="2"/>
<dbReference type="EC" id="2.3.1.286" evidence="2 3"/>
<dbReference type="EMBL" id="BC116055">
    <property type="protein sequence ID" value="AAI16056.1"/>
    <property type="molecule type" value="mRNA"/>
</dbReference>
<dbReference type="RefSeq" id="NP_001069253.1">
    <property type="nucleotide sequence ID" value="NM_001075785.1"/>
</dbReference>
<dbReference type="RefSeq" id="XP_010812228.1">
    <property type="nucleotide sequence ID" value="XM_010813926.2"/>
</dbReference>
<dbReference type="SMR" id="Q1JQC6"/>
<dbReference type="FunCoup" id="Q1JQC6">
    <property type="interactions" value="1490"/>
</dbReference>
<dbReference type="STRING" id="9913.ENSBTAP00000028210"/>
<dbReference type="PaxDb" id="9913-ENSBTAP00000028210"/>
<dbReference type="GeneID" id="519328"/>
<dbReference type="KEGG" id="bta:519328"/>
<dbReference type="CTD" id="23409"/>
<dbReference type="eggNOG" id="KOG2683">
    <property type="taxonomic scope" value="Eukaryota"/>
</dbReference>
<dbReference type="HOGENOM" id="CLU_023643_3_2_1"/>
<dbReference type="InParanoid" id="Q1JQC6"/>
<dbReference type="OrthoDB" id="424302at2759"/>
<dbReference type="TreeFam" id="TF106182"/>
<dbReference type="Proteomes" id="UP000009136">
    <property type="component" value="Unplaced"/>
</dbReference>
<dbReference type="GO" id="GO:0005759">
    <property type="term" value="C:mitochondrial matrix"/>
    <property type="evidence" value="ECO:0000314"/>
    <property type="project" value="UniProtKB"/>
</dbReference>
<dbReference type="GO" id="GO:0005739">
    <property type="term" value="C:mitochondrion"/>
    <property type="evidence" value="ECO:0000250"/>
    <property type="project" value="UniProtKB"/>
</dbReference>
<dbReference type="GO" id="GO:0017136">
    <property type="term" value="F:histone deacetylase activity, NAD-dependent"/>
    <property type="evidence" value="ECO:0000318"/>
    <property type="project" value="GO_Central"/>
</dbReference>
<dbReference type="GO" id="GO:0070403">
    <property type="term" value="F:NAD+ binding"/>
    <property type="evidence" value="ECO:0000318"/>
    <property type="project" value="GO_Central"/>
</dbReference>
<dbReference type="GO" id="GO:0003950">
    <property type="term" value="F:NAD+ poly-ADP-ribosyltransferase activity"/>
    <property type="evidence" value="ECO:0000250"/>
    <property type="project" value="UniProtKB"/>
</dbReference>
<dbReference type="GO" id="GO:0140803">
    <property type="term" value="F:NAD+-protein-cysteine ADP-ribosyltransferase activity"/>
    <property type="evidence" value="ECO:0007669"/>
    <property type="project" value="RHEA"/>
</dbReference>
<dbReference type="GO" id="GO:0106420">
    <property type="term" value="F:NAD-dependent protein biotinidase activity"/>
    <property type="evidence" value="ECO:0000250"/>
    <property type="project" value="UniProtKB"/>
</dbReference>
<dbReference type="GO" id="GO:0106419">
    <property type="term" value="F:NAD-dependent protein lipoamidase activity"/>
    <property type="evidence" value="ECO:0000250"/>
    <property type="project" value="UniProtKB"/>
</dbReference>
<dbReference type="GO" id="GO:0034979">
    <property type="term" value="F:NAD-dependent protein lysine deacetylase activity"/>
    <property type="evidence" value="ECO:0000250"/>
    <property type="project" value="UniProtKB"/>
</dbReference>
<dbReference type="GO" id="GO:0016779">
    <property type="term" value="F:nucleotidyltransferase activity"/>
    <property type="evidence" value="ECO:0007669"/>
    <property type="project" value="UniProtKB-KW"/>
</dbReference>
<dbReference type="GO" id="GO:0008270">
    <property type="term" value="F:zinc ion binding"/>
    <property type="evidence" value="ECO:0007669"/>
    <property type="project" value="UniProtKB-UniRule"/>
</dbReference>
<dbReference type="GO" id="GO:0006974">
    <property type="term" value="P:DNA damage response"/>
    <property type="evidence" value="ECO:0000250"/>
    <property type="project" value="UniProtKB"/>
</dbReference>
<dbReference type="GO" id="GO:0006541">
    <property type="term" value="P:glutamine metabolic process"/>
    <property type="evidence" value="ECO:0000250"/>
    <property type="project" value="UniProtKB"/>
</dbReference>
<dbReference type="GO" id="GO:0046322">
    <property type="term" value="P:negative regulation of fatty acid oxidation"/>
    <property type="evidence" value="ECO:0000250"/>
    <property type="project" value="UniProtKB"/>
</dbReference>
<dbReference type="GO" id="GO:0046676">
    <property type="term" value="P:negative regulation of insulin secretion"/>
    <property type="evidence" value="ECO:0000250"/>
    <property type="project" value="UniProtKB"/>
</dbReference>
<dbReference type="GO" id="GO:0034983">
    <property type="term" value="P:peptidyl-lysine deacetylation"/>
    <property type="evidence" value="ECO:0000250"/>
    <property type="project" value="UniProtKB"/>
</dbReference>
<dbReference type="GO" id="GO:0046889">
    <property type="term" value="P:positive regulation of lipid biosynthetic process"/>
    <property type="evidence" value="ECO:0000250"/>
    <property type="project" value="UniProtKB"/>
</dbReference>
<dbReference type="GO" id="GO:1904182">
    <property type="term" value="P:regulation of pyruvate dehydrogenase activity"/>
    <property type="evidence" value="ECO:0000250"/>
    <property type="project" value="UniProtKB"/>
</dbReference>
<dbReference type="GO" id="GO:0072350">
    <property type="term" value="P:tricarboxylic acid metabolic process"/>
    <property type="evidence" value="ECO:0000250"/>
    <property type="project" value="UniProtKB"/>
</dbReference>
<dbReference type="CDD" id="cd01409">
    <property type="entry name" value="SIRT4"/>
    <property type="match status" value="1"/>
</dbReference>
<dbReference type="Gene3D" id="3.30.1600.10">
    <property type="entry name" value="SIR2/SIRT2 'Small Domain"/>
    <property type="match status" value="1"/>
</dbReference>
<dbReference type="Gene3D" id="3.40.50.1220">
    <property type="entry name" value="TPP-binding domain"/>
    <property type="match status" value="1"/>
</dbReference>
<dbReference type="HAMAP" id="MF_01967">
    <property type="entry name" value="Sirtuin_ClassII"/>
    <property type="match status" value="1"/>
</dbReference>
<dbReference type="InterPro" id="IPR029035">
    <property type="entry name" value="DHS-like_NAD/FAD-binding_dom"/>
</dbReference>
<dbReference type="InterPro" id="IPR050134">
    <property type="entry name" value="NAD-dep_sirtuin_deacylases"/>
</dbReference>
<dbReference type="InterPro" id="IPR003000">
    <property type="entry name" value="Sirtuin"/>
</dbReference>
<dbReference type="InterPro" id="IPR026591">
    <property type="entry name" value="Sirtuin_cat_small_dom_sf"/>
</dbReference>
<dbReference type="InterPro" id="IPR026587">
    <property type="entry name" value="Sirtuin_class_II"/>
</dbReference>
<dbReference type="InterPro" id="IPR026590">
    <property type="entry name" value="Ssirtuin_cat_dom"/>
</dbReference>
<dbReference type="NCBIfam" id="NF003738">
    <property type="entry name" value="PRK05333.1"/>
    <property type="match status" value="1"/>
</dbReference>
<dbReference type="PANTHER" id="PTHR11085">
    <property type="entry name" value="NAD-DEPENDENT PROTEIN DEACYLASE SIRTUIN-5, MITOCHONDRIAL-RELATED"/>
    <property type="match status" value="1"/>
</dbReference>
<dbReference type="PANTHER" id="PTHR11085:SF10">
    <property type="entry name" value="NAD-DEPENDENT PROTEIN DEACYLASE SIRTUIN-5, MITOCHONDRIAL-RELATED"/>
    <property type="match status" value="1"/>
</dbReference>
<dbReference type="Pfam" id="PF02146">
    <property type="entry name" value="SIR2"/>
    <property type="match status" value="1"/>
</dbReference>
<dbReference type="SUPFAM" id="SSF52467">
    <property type="entry name" value="DHS-like NAD/FAD-binding domain"/>
    <property type="match status" value="1"/>
</dbReference>
<dbReference type="PROSITE" id="PS50305">
    <property type="entry name" value="SIRTUIN"/>
    <property type="match status" value="1"/>
</dbReference>
<reference key="1">
    <citation type="submission" date="2006-05" db="EMBL/GenBank/DDBJ databases">
        <authorList>
            <consortium name="NIH - Mammalian Gene Collection (MGC) project"/>
        </authorList>
    </citation>
    <scope>NUCLEOTIDE SEQUENCE [LARGE SCALE MRNA]</scope>
    <source>
        <strain>Hereford</strain>
        <tissue>Ascending colon</tissue>
    </source>
</reference>